<dbReference type="EC" id="3.5.4.13" evidence="1"/>
<dbReference type="EMBL" id="CP000746">
    <property type="protein sequence ID" value="ABR74242.1"/>
    <property type="molecule type" value="Genomic_DNA"/>
</dbReference>
<dbReference type="RefSeq" id="WP_012072620.1">
    <property type="nucleotide sequence ID" value="NC_009655.1"/>
</dbReference>
<dbReference type="SMR" id="A6VMP5"/>
<dbReference type="STRING" id="339671.Asuc_0872"/>
<dbReference type="KEGG" id="asu:Asuc_0872"/>
<dbReference type="eggNOG" id="COG0717">
    <property type="taxonomic scope" value="Bacteria"/>
</dbReference>
<dbReference type="HOGENOM" id="CLU_087476_2_0_6"/>
<dbReference type="OrthoDB" id="9780956at2"/>
<dbReference type="UniPathway" id="UPA00610">
    <property type="reaction ID" value="UER00665"/>
</dbReference>
<dbReference type="Proteomes" id="UP000001114">
    <property type="component" value="Chromosome"/>
</dbReference>
<dbReference type="GO" id="GO:0008829">
    <property type="term" value="F:dCTP deaminase activity"/>
    <property type="evidence" value="ECO:0007669"/>
    <property type="project" value="UniProtKB-UniRule"/>
</dbReference>
<dbReference type="GO" id="GO:0000166">
    <property type="term" value="F:nucleotide binding"/>
    <property type="evidence" value="ECO:0007669"/>
    <property type="project" value="UniProtKB-KW"/>
</dbReference>
<dbReference type="GO" id="GO:0006226">
    <property type="term" value="P:dUMP biosynthetic process"/>
    <property type="evidence" value="ECO:0007669"/>
    <property type="project" value="UniProtKB-UniPathway"/>
</dbReference>
<dbReference type="GO" id="GO:0006229">
    <property type="term" value="P:dUTP biosynthetic process"/>
    <property type="evidence" value="ECO:0007669"/>
    <property type="project" value="UniProtKB-UniRule"/>
</dbReference>
<dbReference type="GO" id="GO:0015949">
    <property type="term" value="P:nucleobase-containing small molecule interconversion"/>
    <property type="evidence" value="ECO:0007669"/>
    <property type="project" value="TreeGrafter"/>
</dbReference>
<dbReference type="CDD" id="cd07557">
    <property type="entry name" value="trimeric_dUTPase"/>
    <property type="match status" value="1"/>
</dbReference>
<dbReference type="FunFam" id="2.70.40.10:FF:000003">
    <property type="entry name" value="dCTP deaminase"/>
    <property type="match status" value="1"/>
</dbReference>
<dbReference type="Gene3D" id="2.70.40.10">
    <property type="match status" value="1"/>
</dbReference>
<dbReference type="HAMAP" id="MF_00146">
    <property type="entry name" value="dCTP_deaminase"/>
    <property type="match status" value="1"/>
</dbReference>
<dbReference type="InterPro" id="IPR011962">
    <property type="entry name" value="dCTP_deaminase"/>
</dbReference>
<dbReference type="InterPro" id="IPR036157">
    <property type="entry name" value="dUTPase-like_sf"/>
</dbReference>
<dbReference type="InterPro" id="IPR033704">
    <property type="entry name" value="dUTPase_trimeric"/>
</dbReference>
<dbReference type="NCBIfam" id="TIGR02274">
    <property type="entry name" value="dCTP_deam"/>
    <property type="match status" value="1"/>
</dbReference>
<dbReference type="PANTHER" id="PTHR42680">
    <property type="entry name" value="DCTP DEAMINASE"/>
    <property type="match status" value="1"/>
</dbReference>
<dbReference type="PANTHER" id="PTHR42680:SF3">
    <property type="entry name" value="DCTP DEAMINASE"/>
    <property type="match status" value="1"/>
</dbReference>
<dbReference type="Pfam" id="PF22769">
    <property type="entry name" value="DCD"/>
    <property type="match status" value="1"/>
</dbReference>
<dbReference type="SUPFAM" id="SSF51283">
    <property type="entry name" value="dUTPase-like"/>
    <property type="match status" value="1"/>
</dbReference>
<feature type="chain" id="PRO_1000071475" description="dCTP deaminase">
    <location>
        <begin position="1"/>
        <end position="194"/>
    </location>
</feature>
<feature type="region of interest" description="Disordered" evidence="2">
    <location>
        <begin position="173"/>
        <end position="194"/>
    </location>
</feature>
<feature type="compositionally biased region" description="Polar residues" evidence="2">
    <location>
        <begin position="180"/>
        <end position="194"/>
    </location>
</feature>
<feature type="active site" description="Proton donor/acceptor" evidence="1">
    <location>
        <position position="138"/>
    </location>
</feature>
<feature type="binding site" evidence="1">
    <location>
        <begin position="110"/>
        <end position="115"/>
    </location>
    <ligand>
        <name>dCTP</name>
        <dbReference type="ChEBI" id="CHEBI:61481"/>
    </ligand>
</feature>
<feature type="binding site" evidence="1">
    <location>
        <position position="128"/>
    </location>
    <ligand>
        <name>dCTP</name>
        <dbReference type="ChEBI" id="CHEBI:61481"/>
    </ligand>
</feature>
<feature type="binding site" evidence="1">
    <location>
        <begin position="136"/>
        <end position="138"/>
    </location>
    <ligand>
        <name>dCTP</name>
        <dbReference type="ChEBI" id="CHEBI:61481"/>
    </ligand>
</feature>
<feature type="binding site" evidence="1">
    <location>
        <position position="171"/>
    </location>
    <ligand>
        <name>dCTP</name>
        <dbReference type="ChEBI" id="CHEBI:61481"/>
    </ligand>
</feature>
<feature type="binding site" evidence="1">
    <location>
        <position position="178"/>
    </location>
    <ligand>
        <name>dCTP</name>
        <dbReference type="ChEBI" id="CHEBI:61481"/>
    </ligand>
</feature>
<feature type="binding site" evidence="1">
    <location>
        <position position="182"/>
    </location>
    <ligand>
        <name>dCTP</name>
        <dbReference type="ChEBI" id="CHEBI:61481"/>
    </ligand>
</feature>
<name>DCD_ACTSZ</name>
<sequence length="194" mass="21400">MRLCDTDIEKHLDEGIITISPRPDNGKINGATIDLRLGNSFRVFREHSAPYIDVSGPKEAVAEQLERVMSDEIIVADNEAFFLHPGVLALATTLESVKLPADIIGWLDGRSSLARLGLMVHVTAHRIDPGWEGKIVLEFYNSGKLPLALRPNMIIGALSFEVLSGPAARPYNSRQDAKYKNQQSAVASRINQDR</sequence>
<organism>
    <name type="scientific">Actinobacillus succinogenes (strain ATCC 55618 / DSM 22257 / CCUG 43843 / 130Z)</name>
    <dbReference type="NCBI Taxonomy" id="339671"/>
    <lineage>
        <taxon>Bacteria</taxon>
        <taxon>Pseudomonadati</taxon>
        <taxon>Pseudomonadota</taxon>
        <taxon>Gammaproteobacteria</taxon>
        <taxon>Pasteurellales</taxon>
        <taxon>Pasteurellaceae</taxon>
        <taxon>Actinobacillus</taxon>
    </lineage>
</organism>
<accession>A6VMP5</accession>
<evidence type="ECO:0000255" key="1">
    <source>
        <dbReference type="HAMAP-Rule" id="MF_00146"/>
    </source>
</evidence>
<evidence type="ECO:0000256" key="2">
    <source>
        <dbReference type="SAM" id="MobiDB-lite"/>
    </source>
</evidence>
<protein>
    <recommendedName>
        <fullName evidence="1">dCTP deaminase</fullName>
        <ecNumber evidence="1">3.5.4.13</ecNumber>
    </recommendedName>
    <alternativeName>
        <fullName evidence="1">Deoxycytidine triphosphate deaminase</fullName>
    </alternativeName>
</protein>
<keyword id="KW-0378">Hydrolase</keyword>
<keyword id="KW-0546">Nucleotide metabolism</keyword>
<keyword id="KW-0547">Nucleotide-binding</keyword>
<keyword id="KW-1185">Reference proteome</keyword>
<reference key="1">
    <citation type="journal article" date="2010" name="BMC Genomics">
        <title>A genomic perspective on the potential of Actinobacillus succinogenes for industrial succinate production.</title>
        <authorList>
            <person name="McKinlay J.B."/>
            <person name="Laivenieks M."/>
            <person name="Schindler B.D."/>
            <person name="McKinlay A.A."/>
            <person name="Siddaramappa S."/>
            <person name="Challacombe J.F."/>
            <person name="Lowry S.R."/>
            <person name="Clum A."/>
            <person name="Lapidus A.L."/>
            <person name="Burkhart K.B."/>
            <person name="Harkins V."/>
            <person name="Vieille C."/>
        </authorList>
    </citation>
    <scope>NUCLEOTIDE SEQUENCE [LARGE SCALE GENOMIC DNA]</scope>
    <source>
        <strain>ATCC 55618 / DSM 22257 / CCUG 43843 / 130Z</strain>
    </source>
</reference>
<comment type="function">
    <text evidence="1">Catalyzes the deamination of dCTP to dUTP.</text>
</comment>
<comment type="catalytic activity">
    <reaction evidence="1">
        <text>dCTP + H2O + H(+) = dUTP + NH4(+)</text>
        <dbReference type="Rhea" id="RHEA:22680"/>
        <dbReference type="ChEBI" id="CHEBI:15377"/>
        <dbReference type="ChEBI" id="CHEBI:15378"/>
        <dbReference type="ChEBI" id="CHEBI:28938"/>
        <dbReference type="ChEBI" id="CHEBI:61481"/>
        <dbReference type="ChEBI" id="CHEBI:61555"/>
        <dbReference type="EC" id="3.5.4.13"/>
    </reaction>
</comment>
<comment type="pathway">
    <text evidence="1">Pyrimidine metabolism; dUMP biosynthesis; dUMP from dCTP (dUTP route): step 1/2.</text>
</comment>
<comment type="subunit">
    <text evidence="1">Homotrimer.</text>
</comment>
<comment type="similarity">
    <text evidence="1">Belongs to the dCTP deaminase family.</text>
</comment>
<gene>
    <name evidence="1" type="primary">dcd</name>
    <name type="ordered locus">Asuc_0872</name>
</gene>
<proteinExistence type="inferred from homology"/>